<name>PTER_XENTR</name>
<reference key="1">
    <citation type="submission" date="2007-11" db="EMBL/GenBank/DDBJ databases">
        <authorList>
            <consortium name="NIH - Xenopus Gene Collection (XGC) project"/>
        </authorList>
    </citation>
    <scope>NUCLEOTIDE SEQUENCE [LARGE SCALE MRNA]</scope>
    <source>
        <tissue>Thymus</tissue>
    </source>
</reference>
<accession>A9JTS9</accession>
<dbReference type="EC" id="3.1.-.-" evidence="2"/>
<dbReference type="EMBL" id="BC155461">
    <property type="protein sequence ID" value="AAI55462.1"/>
    <property type="molecule type" value="mRNA"/>
</dbReference>
<dbReference type="RefSeq" id="NP_001106618.1">
    <property type="nucleotide sequence ID" value="NM_001113147.1"/>
</dbReference>
<dbReference type="SMR" id="A9JTS9"/>
<dbReference type="FunCoup" id="A9JTS9">
    <property type="interactions" value="209"/>
</dbReference>
<dbReference type="STRING" id="8364.ENSXETP00000036030"/>
<dbReference type="PaxDb" id="8364-ENSXETP00000016226"/>
<dbReference type="GeneID" id="100127841"/>
<dbReference type="KEGG" id="xtr:100127841"/>
<dbReference type="AGR" id="Xenbase:XB-GENE-1007035"/>
<dbReference type="CTD" id="9317"/>
<dbReference type="Xenbase" id="XB-GENE-1007035">
    <property type="gene designation" value="pter"/>
</dbReference>
<dbReference type="eggNOG" id="ENOG502QQQR">
    <property type="taxonomic scope" value="Eukaryota"/>
</dbReference>
<dbReference type="InParanoid" id="A9JTS9"/>
<dbReference type="OMA" id="MVKCGFI"/>
<dbReference type="OrthoDB" id="9998343at2759"/>
<dbReference type="Proteomes" id="UP000008143">
    <property type="component" value="Chromosome 6"/>
</dbReference>
<dbReference type="GO" id="GO:0005829">
    <property type="term" value="C:cytosol"/>
    <property type="evidence" value="ECO:0000250"/>
    <property type="project" value="UniProtKB"/>
</dbReference>
<dbReference type="GO" id="GO:0141215">
    <property type="term" value="F:N-acetyltaurine hydrolase activity"/>
    <property type="evidence" value="ECO:0000250"/>
    <property type="project" value="UniProtKB"/>
</dbReference>
<dbReference type="GO" id="GO:0008270">
    <property type="term" value="F:zinc ion binding"/>
    <property type="evidence" value="ECO:0007669"/>
    <property type="project" value="InterPro"/>
</dbReference>
<dbReference type="GO" id="GO:0009056">
    <property type="term" value="P:catabolic process"/>
    <property type="evidence" value="ECO:0007669"/>
    <property type="project" value="InterPro"/>
</dbReference>
<dbReference type="GO" id="GO:0032098">
    <property type="term" value="P:regulation of appetite"/>
    <property type="evidence" value="ECO:0000250"/>
    <property type="project" value="UniProtKB"/>
</dbReference>
<dbReference type="GO" id="GO:0019530">
    <property type="term" value="P:taurine metabolic process"/>
    <property type="evidence" value="ECO:0000250"/>
    <property type="project" value="UniProtKB"/>
</dbReference>
<dbReference type="CDD" id="cd00530">
    <property type="entry name" value="PTE"/>
    <property type="match status" value="1"/>
</dbReference>
<dbReference type="Gene3D" id="3.20.20.140">
    <property type="entry name" value="Metal-dependent hydrolases"/>
    <property type="match status" value="1"/>
</dbReference>
<dbReference type="InterPro" id="IPR017947">
    <property type="entry name" value="AryldialkylPase_Zn-BS"/>
</dbReference>
<dbReference type="InterPro" id="IPR032466">
    <property type="entry name" value="Metal_Hydrolase"/>
</dbReference>
<dbReference type="InterPro" id="IPR001559">
    <property type="entry name" value="Phosphotriesterase"/>
</dbReference>
<dbReference type="PANTHER" id="PTHR10819">
    <property type="entry name" value="PHOSPHOTRIESTERASE-RELATED"/>
    <property type="match status" value="1"/>
</dbReference>
<dbReference type="PANTHER" id="PTHR10819:SF3">
    <property type="entry name" value="PHOSPHOTRIESTERASE-RELATED PROTEIN"/>
    <property type="match status" value="1"/>
</dbReference>
<dbReference type="Pfam" id="PF02126">
    <property type="entry name" value="PTE"/>
    <property type="match status" value="1"/>
</dbReference>
<dbReference type="PIRSF" id="PIRSF016839">
    <property type="entry name" value="PhP"/>
    <property type="match status" value="1"/>
</dbReference>
<dbReference type="SUPFAM" id="SSF51556">
    <property type="entry name" value="Metallo-dependent hydrolases"/>
    <property type="match status" value="1"/>
</dbReference>
<dbReference type="PROSITE" id="PS01322">
    <property type="entry name" value="PHOSPHOTRIESTERASE_1"/>
    <property type="match status" value="1"/>
</dbReference>
<dbReference type="PROSITE" id="PS51347">
    <property type="entry name" value="PHOSPHOTRIESTERASE_2"/>
    <property type="match status" value="1"/>
</dbReference>
<proteinExistence type="evidence at transcript level"/>
<gene>
    <name type="primary">pter</name>
</gene>
<sequence>MSSLSGKVQTVLGPIHPEQLGRTLTHEHLSMTFECCYCPPPAHQGTLSDAPILMKNLFWVKQNPYSNKENLLLSQEIEAITEEIMIFKAAGGGSIVENTTTGISRDIKMLKKMAEETGVNIISGAGFYVDATHSSSTRSMTVEQLTEVLVNEVLQGADGTNIKCGIIGEIGCSWPLTESEKKVLQATAEAQSQLGCPVNIHPGRNSDAPFHIIQILQEAGADISKTVMSHLDRTIFDETKLLEFAKLGSYLEYDLFGTEMLNYQFNQAVDMPSDNDRIKMLRLLINEGYEDRIVVSHDIHTKNRLLKYGGHGYSHILNNIVPKMLVRGISQQCVDKILLENPKQWLTFK</sequence>
<keyword id="KW-0963">Cytoplasm</keyword>
<keyword id="KW-0378">Hydrolase</keyword>
<keyword id="KW-0479">Metal-binding</keyword>
<keyword id="KW-1185">Reference proteome</keyword>
<organism>
    <name type="scientific">Xenopus tropicalis</name>
    <name type="common">Western clawed frog</name>
    <name type="synonym">Silurana tropicalis</name>
    <dbReference type="NCBI Taxonomy" id="8364"/>
    <lineage>
        <taxon>Eukaryota</taxon>
        <taxon>Metazoa</taxon>
        <taxon>Chordata</taxon>
        <taxon>Craniata</taxon>
        <taxon>Vertebrata</taxon>
        <taxon>Euteleostomi</taxon>
        <taxon>Amphibia</taxon>
        <taxon>Batrachia</taxon>
        <taxon>Anura</taxon>
        <taxon>Pipoidea</taxon>
        <taxon>Pipidae</taxon>
        <taxon>Xenopodinae</taxon>
        <taxon>Xenopus</taxon>
        <taxon>Silurana</taxon>
    </lineage>
</organism>
<evidence type="ECO:0000250" key="1">
    <source>
        <dbReference type="UniProtKB" id="P45548"/>
    </source>
</evidence>
<evidence type="ECO:0000250" key="2">
    <source>
        <dbReference type="UniProtKB" id="Q60866"/>
    </source>
</evidence>
<evidence type="ECO:0000250" key="3">
    <source>
        <dbReference type="UniProtKB" id="Q96BW5"/>
    </source>
</evidence>
<evidence type="ECO:0000255" key="4">
    <source>
        <dbReference type="PROSITE-ProRule" id="PRU00679"/>
    </source>
</evidence>
<evidence type="ECO:0000305" key="5"/>
<feature type="chain" id="PRO_0000388671" description="N-acetyltaurine hydrolase">
    <location>
        <begin position="1"/>
        <end position="349"/>
    </location>
</feature>
<feature type="binding site" evidence="1">
    <location>
        <position position="26"/>
    </location>
    <ligand>
        <name>a divalent metal cation</name>
        <dbReference type="ChEBI" id="CHEBI:60240"/>
        <label>1</label>
    </ligand>
</feature>
<feature type="binding site" evidence="1">
    <location>
        <position position="28"/>
    </location>
    <ligand>
        <name>a divalent metal cation</name>
        <dbReference type="ChEBI" id="CHEBI:60240"/>
        <label>1</label>
    </ligand>
</feature>
<feature type="binding site" evidence="1">
    <location>
        <position position="169"/>
    </location>
    <ligand>
        <name>a divalent metal cation</name>
        <dbReference type="ChEBI" id="CHEBI:60240"/>
        <label>1</label>
    </ligand>
</feature>
<feature type="binding site" evidence="1">
    <location>
        <position position="169"/>
    </location>
    <ligand>
        <name>a divalent metal cation</name>
        <dbReference type="ChEBI" id="CHEBI:60240"/>
        <label>2</label>
    </ligand>
</feature>
<feature type="binding site" evidence="1">
    <location>
        <position position="201"/>
    </location>
    <ligand>
        <name>a divalent metal cation</name>
        <dbReference type="ChEBI" id="CHEBI:60240"/>
        <label>2</label>
    </ligand>
</feature>
<feature type="binding site" evidence="1">
    <location>
        <position position="230"/>
    </location>
    <ligand>
        <name>a divalent metal cation</name>
        <dbReference type="ChEBI" id="CHEBI:60240"/>
        <label>2</label>
    </ligand>
</feature>
<feature type="binding site" evidence="1">
    <location>
        <position position="298"/>
    </location>
    <ligand>
        <name>a divalent metal cation</name>
        <dbReference type="ChEBI" id="CHEBI:60240"/>
        <label>1</label>
    </ligand>
</feature>
<protein>
    <recommendedName>
        <fullName evidence="5">N-acetyltaurine hydrolase</fullName>
        <ecNumber evidence="2">3.1.-.-</ecNumber>
    </recommendedName>
    <alternativeName>
        <fullName evidence="2">Phosphotriesterase-related protein</fullName>
    </alternativeName>
</protein>
<comment type="function">
    <text evidence="2">N-acetyltaurine hydrolase that catalyzes the hydrolysis of N-acetyltaurine into taurine and acetate. PTER also acts on other N-acetyl amino acids (Met, Ile, Leu, Val) and N-propionyltaurine, but at lower rates.</text>
</comment>
<comment type="catalytic activity">
    <reaction evidence="3">
        <text>N-acetyltaurine + H2O = taurine + acetate</text>
        <dbReference type="Rhea" id="RHEA:81107"/>
        <dbReference type="ChEBI" id="CHEBI:15377"/>
        <dbReference type="ChEBI" id="CHEBI:30089"/>
        <dbReference type="ChEBI" id="CHEBI:133737"/>
        <dbReference type="ChEBI" id="CHEBI:507393"/>
    </reaction>
    <physiologicalReaction direction="left-to-right" evidence="3">
        <dbReference type="Rhea" id="RHEA:81108"/>
    </physiologicalReaction>
</comment>
<comment type="catalytic activity">
    <reaction evidence="2">
        <text>N-propanoyltaurine + H2O = propanoate + taurine</text>
        <dbReference type="Rhea" id="RHEA:81111"/>
        <dbReference type="ChEBI" id="CHEBI:15377"/>
        <dbReference type="ChEBI" id="CHEBI:17272"/>
        <dbReference type="ChEBI" id="CHEBI:231795"/>
        <dbReference type="ChEBI" id="CHEBI:507393"/>
    </reaction>
    <physiologicalReaction direction="left-to-right" evidence="2">
        <dbReference type="Rhea" id="RHEA:81112"/>
    </physiologicalReaction>
</comment>
<comment type="catalytic activity">
    <reaction evidence="2">
        <text>N-acetyl-L-methionine + H2O = L-methionine + acetate</text>
        <dbReference type="Rhea" id="RHEA:67440"/>
        <dbReference type="ChEBI" id="CHEBI:15377"/>
        <dbReference type="ChEBI" id="CHEBI:30089"/>
        <dbReference type="ChEBI" id="CHEBI:57844"/>
        <dbReference type="ChEBI" id="CHEBI:71670"/>
    </reaction>
    <physiologicalReaction direction="left-to-right" evidence="2">
        <dbReference type="Rhea" id="RHEA:67441"/>
    </physiologicalReaction>
</comment>
<comment type="catalytic activity">
    <reaction evidence="2">
        <text>N-acetyl-L-isoleucine + H2O = L-isoleucine + acetate</text>
        <dbReference type="Rhea" id="RHEA:81119"/>
        <dbReference type="ChEBI" id="CHEBI:15377"/>
        <dbReference type="ChEBI" id="CHEBI:30089"/>
        <dbReference type="ChEBI" id="CHEBI:58045"/>
        <dbReference type="ChEBI" id="CHEBI:133735"/>
    </reaction>
    <physiologicalReaction direction="left-to-right" evidence="2">
        <dbReference type="Rhea" id="RHEA:81120"/>
    </physiologicalReaction>
</comment>
<comment type="catalytic activity">
    <reaction evidence="2">
        <text>N-acetyl-L-leucine + H2O = L-leucine + acetate</text>
        <dbReference type="Rhea" id="RHEA:81115"/>
        <dbReference type="ChEBI" id="CHEBI:15377"/>
        <dbReference type="ChEBI" id="CHEBI:30089"/>
        <dbReference type="ChEBI" id="CHEBI:57427"/>
        <dbReference type="ChEBI" id="CHEBI:58270"/>
    </reaction>
    <physiologicalReaction direction="left-to-right" evidence="2">
        <dbReference type="Rhea" id="RHEA:81116"/>
    </physiologicalReaction>
</comment>
<comment type="catalytic activity">
    <reaction evidence="2">
        <text>N-acetyl-L-valine + H2O = L-valine + acetate</text>
        <dbReference type="Rhea" id="RHEA:81123"/>
        <dbReference type="ChEBI" id="CHEBI:15377"/>
        <dbReference type="ChEBI" id="CHEBI:30089"/>
        <dbReference type="ChEBI" id="CHEBI:57762"/>
        <dbReference type="ChEBI" id="CHEBI:133716"/>
    </reaction>
    <physiologicalReaction direction="left-to-right" evidence="2">
        <dbReference type="Rhea" id="RHEA:81124"/>
    </physiologicalReaction>
</comment>
<comment type="cofactor">
    <cofactor evidence="1">
        <name>a divalent metal cation</name>
        <dbReference type="ChEBI" id="CHEBI:60240"/>
    </cofactor>
    <text evidence="1">Binds 2 divalent metal cations per subunit.</text>
</comment>
<comment type="subcellular location">
    <subcellularLocation>
        <location evidence="2">Cytoplasm</location>
        <location evidence="2">Cytosol</location>
    </subcellularLocation>
</comment>
<comment type="similarity">
    <text evidence="4">Belongs to the metallo-dependent hydrolases superfamily. Phosphotriesterase family.</text>
</comment>